<accession>Q7MHR4</accession>
<gene>
    <name evidence="1" type="primary">recA</name>
    <name type="ordered locus">VV2805</name>
</gene>
<reference key="1">
    <citation type="journal article" date="2003" name="Genome Res.">
        <title>Comparative genome analysis of Vibrio vulnificus, a marine pathogen.</title>
        <authorList>
            <person name="Chen C.-Y."/>
            <person name="Wu K.-M."/>
            <person name="Chang Y.-C."/>
            <person name="Chang C.-H."/>
            <person name="Tsai H.-C."/>
            <person name="Liao T.-L."/>
            <person name="Liu Y.-M."/>
            <person name="Chen H.-J."/>
            <person name="Shen A.B.-T."/>
            <person name="Li J.-C."/>
            <person name="Su T.-L."/>
            <person name="Shao C.-P."/>
            <person name="Lee C.-T."/>
            <person name="Hor L.-I."/>
            <person name="Tsai S.-F."/>
        </authorList>
    </citation>
    <scope>NUCLEOTIDE SEQUENCE [LARGE SCALE GENOMIC DNA]</scope>
    <source>
        <strain>YJ016</strain>
    </source>
</reference>
<organism>
    <name type="scientific">Vibrio vulnificus (strain YJ016)</name>
    <dbReference type="NCBI Taxonomy" id="196600"/>
    <lineage>
        <taxon>Bacteria</taxon>
        <taxon>Pseudomonadati</taxon>
        <taxon>Pseudomonadota</taxon>
        <taxon>Gammaproteobacteria</taxon>
        <taxon>Vibrionales</taxon>
        <taxon>Vibrionaceae</taxon>
        <taxon>Vibrio</taxon>
    </lineage>
</organism>
<proteinExistence type="inferred from homology"/>
<comment type="function">
    <text evidence="1">Can catalyze the hydrolysis of ATP in the presence of single-stranded DNA, the ATP-dependent uptake of single-stranded DNA by duplex DNA, and the ATP-dependent hybridization of homologous single-stranded DNAs. It interacts with LexA causing its activation and leading to its autocatalytic cleavage.</text>
</comment>
<comment type="subcellular location">
    <subcellularLocation>
        <location evidence="1">Cytoplasm</location>
    </subcellularLocation>
</comment>
<comment type="similarity">
    <text evidence="1">Belongs to the RecA family.</text>
</comment>
<comment type="sequence caution" evidence="2">
    <conflict type="erroneous initiation">
        <sequence resource="EMBL-CDS" id="BAC95569"/>
    </conflict>
</comment>
<dbReference type="EMBL" id="BA000037">
    <property type="protein sequence ID" value="BAC95569.1"/>
    <property type="status" value="ALT_INIT"/>
    <property type="molecule type" value="Genomic_DNA"/>
</dbReference>
<dbReference type="RefSeq" id="WP_011079524.1">
    <property type="nucleotide sequence ID" value="NC_005139.1"/>
</dbReference>
<dbReference type="SMR" id="Q7MHR4"/>
<dbReference type="STRING" id="672.VV93_v1c25160"/>
<dbReference type="KEGG" id="vvy:VV2805"/>
<dbReference type="eggNOG" id="COG0468">
    <property type="taxonomic scope" value="Bacteria"/>
</dbReference>
<dbReference type="HOGENOM" id="CLU_040469_3_2_6"/>
<dbReference type="Proteomes" id="UP000002675">
    <property type="component" value="Chromosome I"/>
</dbReference>
<dbReference type="GO" id="GO:0005829">
    <property type="term" value="C:cytosol"/>
    <property type="evidence" value="ECO:0007669"/>
    <property type="project" value="TreeGrafter"/>
</dbReference>
<dbReference type="GO" id="GO:0005524">
    <property type="term" value="F:ATP binding"/>
    <property type="evidence" value="ECO:0007669"/>
    <property type="project" value="UniProtKB-UniRule"/>
</dbReference>
<dbReference type="GO" id="GO:0016887">
    <property type="term" value="F:ATP hydrolysis activity"/>
    <property type="evidence" value="ECO:0007669"/>
    <property type="project" value="InterPro"/>
</dbReference>
<dbReference type="GO" id="GO:0140664">
    <property type="term" value="F:ATP-dependent DNA damage sensor activity"/>
    <property type="evidence" value="ECO:0007669"/>
    <property type="project" value="InterPro"/>
</dbReference>
<dbReference type="GO" id="GO:0003684">
    <property type="term" value="F:damaged DNA binding"/>
    <property type="evidence" value="ECO:0007669"/>
    <property type="project" value="UniProtKB-UniRule"/>
</dbReference>
<dbReference type="GO" id="GO:0003697">
    <property type="term" value="F:single-stranded DNA binding"/>
    <property type="evidence" value="ECO:0007669"/>
    <property type="project" value="UniProtKB-UniRule"/>
</dbReference>
<dbReference type="GO" id="GO:0006310">
    <property type="term" value="P:DNA recombination"/>
    <property type="evidence" value="ECO:0007669"/>
    <property type="project" value="UniProtKB-UniRule"/>
</dbReference>
<dbReference type="GO" id="GO:0006281">
    <property type="term" value="P:DNA repair"/>
    <property type="evidence" value="ECO:0007669"/>
    <property type="project" value="UniProtKB-UniRule"/>
</dbReference>
<dbReference type="GO" id="GO:0009432">
    <property type="term" value="P:SOS response"/>
    <property type="evidence" value="ECO:0007669"/>
    <property type="project" value="UniProtKB-UniRule"/>
</dbReference>
<dbReference type="CDD" id="cd00983">
    <property type="entry name" value="RecA"/>
    <property type="match status" value="1"/>
</dbReference>
<dbReference type="FunFam" id="3.40.50.300:FF:000087">
    <property type="entry name" value="Recombinase RecA"/>
    <property type="match status" value="1"/>
</dbReference>
<dbReference type="Gene3D" id="3.40.50.300">
    <property type="entry name" value="P-loop containing nucleotide triphosphate hydrolases"/>
    <property type="match status" value="1"/>
</dbReference>
<dbReference type="HAMAP" id="MF_00268">
    <property type="entry name" value="RecA"/>
    <property type="match status" value="1"/>
</dbReference>
<dbReference type="InterPro" id="IPR003593">
    <property type="entry name" value="AAA+_ATPase"/>
</dbReference>
<dbReference type="InterPro" id="IPR013765">
    <property type="entry name" value="DNA_recomb/repair_RecA"/>
</dbReference>
<dbReference type="InterPro" id="IPR020584">
    <property type="entry name" value="DNA_recomb/repair_RecA_CS"/>
</dbReference>
<dbReference type="InterPro" id="IPR027417">
    <property type="entry name" value="P-loop_NTPase"/>
</dbReference>
<dbReference type="InterPro" id="IPR049261">
    <property type="entry name" value="RecA-like_C"/>
</dbReference>
<dbReference type="InterPro" id="IPR049428">
    <property type="entry name" value="RecA-like_N"/>
</dbReference>
<dbReference type="InterPro" id="IPR020588">
    <property type="entry name" value="RecA_ATP-bd"/>
</dbReference>
<dbReference type="InterPro" id="IPR023400">
    <property type="entry name" value="RecA_C_sf"/>
</dbReference>
<dbReference type="InterPro" id="IPR020587">
    <property type="entry name" value="RecA_monomer-monomer_interface"/>
</dbReference>
<dbReference type="NCBIfam" id="TIGR02012">
    <property type="entry name" value="tigrfam_recA"/>
    <property type="match status" value="1"/>
</dbReference>
<dbReference type="PANTHER" id="PTHR45900:SF1">
    <property type="entry name" value="MITOCHONDRIAL DNA REPAIR PROTEIN RECA HOMOLOG-RELATED"/>
    <property type="match status" value="1"/>
</dbReference>
<dbReference type="PANTHER" id="PTHR45900">
    <property type="entry name" value="RECA"/>
    <property type="match status" value="1"/>
</dbReference>
<dbReference type="Pfam" id="PF00154">
    <property type="entry name" value="RecA"/>
    <property type="match status" value="1"/>
</dbReference>
<dbReference type="Pfam" id="PF21096">
    <property type="entry name" value="RecA_C"/>
    <property type="match status" value="1"/>
</dbReference>
<dbReference type="PRINTS" id="PR00142">
    <property type="entry name" value="RECA"/>
</dbReference>
<dbReference type="SMART" id="SM00382">
    <property type="entry name" value="AAA"/>
    <property type="match status" value="1"/>
</dbReference>
<dbReference type="SUPFAM" id="SSF52540">
    <property type="entry name" value="P-loop containing nucleoside triphosphate hydrolases"/>
    <property type="match status" value="1"/>
</dbReference>
<dbReference type="SUPFAM" id="SSF54752">
    <property type="entry name" value="RecA protein, C-terminal domain"/>
    <property type="match status" value="1"/>
</dbReference>
<dbReference type="PROSITE" id="PS00321">
    <property type="entry name" value="RECA_1"/>
    <property type="match status" value="1"/>
</dbReference>
<dbReference type="PROSITE" id="PS50162">
    <property type="entry name" value="RECA_2"/>
    <property type="match status" value="1"/>
</dbReference>
<dbReference type="PROSITE" id="PS50163">
    <property type="entry name" value="RECA_3"/>
    <property type="match status" value="1"/>
</dbReference>
<keyword id="KW-0067">ATP-binding</keyword>
<keyword id="KW-0963">Cytoplasm</keyword>
<keyword id="KW-0227">DNA damage</keyword>
<keyword id="KW-0233">DNA recombination</keyword>
<keyword id="KW-0234">DNA repair</keyword>
<keyword id="KW-0238">DNA-binding</keyword>
<keyword id="KW-0547">Nucleotide-binding</keyword>
<keyword id="KW-0742">SOS response</keyword>
<protein>
    <recommendedName>
        <fullName evidence="1">Protein RecA</fullName>
    </recommendedName>
    <alternativeName>
        <fullName evidence="1">Recombinase A</fullName>
    </alternativeName>
</protein>
<name>RECA_VIBVY</name>
<feature type="chain" id="PRO_0000122896" description="Protein RecA">
    <location>
        <begin position="1"/>
        <end position="349"/>
    </location>
</feature>
<feature type="binding site" evidence="1">
    <location>
        <begin position="65"/>
        <end position="72"/>
    </location>
    <ligand>
        <name>ATP</name>
        <dbReference type="ChEBI" id="CHEBI:30616"/>
    </ligand>
</feature>
<sequence length="349" mass="37738">MDENKQKALAAALGQIEKQFGKGSIMRLGDNRAMDVETISTGSLSLDIALGAGGLPMGRIVEIFGPESSGKTTLTLELIAAAQREGKTCAFIDAEHALDPVYAKKLGVNIDQLLVSQPDTGEQALEICDALARSGAVDVIVVDSVAALTPKAEIEGEMGDSHMGLQARMLSQAMRKLTGNLKQSNCMCIFINQIRMKIGVMFGNPETTTGGNALKFYASVRLDIRRTGAIKEGDEVVGNETRIKVVKNKIAAPFKEANTQIMYGQGFNREGELIDLGVKCKLIEKSGAWYSYNGDKIGQGKANACKYLKENVDVAKVLDTKLREMLLSPANINDESAELVEEMPEQEEF</sequence>
<evidence type="ECO:0000255" key="1">
    <source>
        <dbReference type="HAMAP-Rule" id="MF_00268"/>
    </source>
</evidence>
<evidence type="ECO:0000305" key="2"/>